<accession>P66190</accession>
<accession>Q9JR74</accession>
<organism>
    <name type="scientific">Neisseria meningitidis serogroup B (strain ATCC BAA-335 / MC58)</name>
    <dbReference type="NCBI Taxonomy" id="122586"/>
    <lineage>
        <taxon>Bacteria</taxon>
        <taxon>Pseudomonadati</taxon>
        <taxon>Pseudomonadota</taxon>
        <taxon>Betaproteobacteria</taxon>
        <taxon>Neisseriales</taxon>
        <taxon>Neisseriaceae</taxon>
        <taxon>Neisseria</taxon>
    </lineage>
</organism>
<feature type="chain" id="PRO_0000173136" description="Large ribosomal subunit protein bL31">
    <location>
        <begin position="1"/>
        <end position="71"/>
    </location>
</feature>
<feature type="binding site" evidence="1">
    <location>
        <position position="16"/>
    </location>
    <ligand>
        <name>Zn(2+)</name>
        <dbReference type="ChEBI" id="CHEBI:29105"/>
    </ligand>
</feature>
<feature type="binding site" evidence="1">
    <location>
        <position position="18"/>
    </location>
    <ligand>
        <name>Zn(2+)</name>
        <dbReference type="ChEBI" id="CHEBI:29105"/>
    </ligand>
</feature>
<feature type="binding site" evidence="1">
    <location>
        <position position="38"/>
    </location>
    <ligand>
        <name>Zn(2+)</name>
        <dbReference type="ChEBI" id="CHEBI:29105"/>
    </ligand>
</feature>
<feature type="binding site" evidence="1">
    <location>
        <position position="41"/>
    </location>
    <ligand>
        <name>Zn(2+)</name>
        <dbReference type="ChEBI" id="CHEBI:29105"/>
    </ligand>
</feature>
<dbReference type="EMBL" id="AE002098">
    <property type="protein sequence ID" value="AAF42285.1"/>
    <property type="molecule type" value="Genomic_DNA"/>
</dbReference>
<dbReference type="PIR" id="E81021">
    <property type="entry name" value="E81021"/>
</dbReference>
<dbReference type="RefSeq" id="NP_274950.1">
    <property type="nucleotide sequence ID" value="NC_003112.2"/>
</dbReference>
<dbReference type="RefSeq" id="WP_002218070.1">
    <property type="nucleotide sequence ID" value="NC_003112.2"/>
</dbReference>
<dbReference type="SMR" id="P66190"/>
<dbReference type="FunCoup" id="P66190">
    <property type="interactions" value="415"/>
</dbReference>
<dbReference type="STRING" id="122586.NMB1956"/>
<dbReference type="PaxDb" id="122586-NMB1956"/>
<dbReference type="GeneID" id="93386863"/>
<dbReference type="KEGG" id="nme:NMB1956"/>
<dbReference type="PATRIC" id="fig|122586.8.peg.2490"/>
<dbReference type="HOGENOM" id="CLU_114306_4_0_4"/>
<dbReference type="InParanoid" id="P66190"/>
<dbReference type="OrthoDB" id="9803251at2"/>
<dbReference type="Proteomes" id="UP000000425">
    <property type="component" value="Chromosome"/>
</dbReference>
<dbReference type="GO" id="GO:1990904">
    <property type="term" value="C:ribonucleoprotein complex"/>
    <property type="evidence" value="ECO:0007669"/>
    <property type="project" value="UniProtKB-KW"/>
</dbReference>
<dbReference type="GO" id="GO:0005840">
    <property type="term" value="C:ribosome"/>
    <property type="evidence" value="ECO:0007669"/>
    <property type="project" value="UniProtKB-KW"/>
</dbReference>
<dbReference type="GO" id="GO:0046872">
    <property type="term" value="F:metal ion binding"/>
    <property type="evidence" value="ECO:0007669"/>
    <property type="project" value="UniProtKB-KW"/>
</dbReference>
<dbReference type="GO" id="GO:0019843">
    <property type="term" value="F:rRNA binding"/>
    <property type="evidence" value="ECO:0007669"/>
    <property type="project" value="UniProtKB-KW"/>
</dbReference>
<dbReference type="GO" id="GO:0003735">
    <property type="term" value="F:structural constituent of ribosome"/>
    <property type="evidence" value="ECO:0007669"/>
    <property type="project" value="InterPro"/>
</dbReference>
<dbReference type="GO" id="GO:0006412">
    <property type="term" value="P:translation"/>
    <property type="evidence" value="ECO:0007669"/>
    <property type="project" value="UniProtKB-UniRule"/>
</dbReference>
<dbReference type="Gene3D" id="4.10.830.30">
    <property type="entry name" value="Ribosomal protein L31"/>
    <property type="match status" value="1"/>
</dbReference>
<dbReference type="HAMAP" id="MF_00501">
    <property type="entry name" value="Ribosomal_bL31_1"/>
    <property type="match status" value="1"/>
</dbReference>
<dbReference type="InterPro" id="IPR034704">
    <property type="entry name" value="Ribosomal_bL28/bL31-like_sf"/>
</dbReference>
<dbReference type="InterPro" id="IPR002150">
    <property type="entry name" value="Ribosomal_bL31"/>
</dbReference>
<dbReference type="InterPro" id="IPR027491">
    <property type="entry name" value="Ribosomal_bL31_A"/>
</dbReference>
<dbReference type="InterPro" id="IPR042105">
    <property type="entry name" value="Ribosomal_bL31_sf"/>
</dbReference>
<dbReference type="NCBIfam" id="TIGR00105">
    <property type="entry name" value="L31"/>
    <property type="match status" value="1"/>
</dbReference>
<dbReference type="NCBIfam" id="NF000612">
    <property type="entry name" value="PRK00019.1"/>
    <property type="match status" value="1"/>
</dbReference>
<dbReference type="NCBIfam" id="NF001809">
    <property type="entry name" value="PRK00528.1"/>
    <property type="match status" value="1"/>
</dbReference>
<dbReference type="PANTHER" id="PTHR33280">
    <property type="entry name" value="50S RIBOSOMAL PROTEIN L31, CHLOROPLASTIC"/>
    <property type="match status" value="1"/>
</dbReference>
<dbReference type="PANTHER" id="PTHR33280:SF6">
    <property type="entry name" value="LARGE RIBOSOMAL SUBUNIT PROTEIN BL31A"/>
    <property type="match status" value="1"/>
</dbReference>
<dbReference type="Pfam" id="PF01197">
    <property type="entry name" value="Ribosomal_L31"/>
    <property type="match status" value="1"/>
</dbReference>
<dbReference type="PRINTS" id="PR01249">
    <property type="entry name" value="RIBOSOMALL31"/>
</dbReference>
<dbReference type="SUPFAM" id="SSF143800">
    <property type="entry name" value="L28p-like"/>
    <property type="match status" value="1"/>
</dbReference>
<dbReference type="PROSITE" id="PS01143">
    <property type="entry name" value="RIBOSOMAL_L31"/>
    <property type="match status" value="1"/>
</dbReference>
<evidence type="ECO:0000255" key="1">
    <source>
        <dbReference type="HAMAP-Rule" id="MF_00501"/>
    </source>
</evidence>
<evidence type="ECO:0000305" key="2"/>
<gene>
    <name evidence="1" type="primary">rpmE</name>
    <name type="ordered locus">NMB1956</name>
</gene>
<keyword id="KW-0479">Metal-binding</keyword>
<keyword id="KW-1185">Reference proteome</keyword>
<keyword id="KW-0687">Ribonucleoprotein</keyword>
<keyword id="KW-0689">Ribosomal protein</keyword>
<keyword id="KW-0694">RNA-binding</keyword>
<keyword id="KW-0699">rRNA-binding</keyword>
<keyword id="KW-0862">Zinc</keyword>
<reference key="1">
    <citation type="journal article" date="2000" name="Science">
        <title>Complete genome sequence of Neisseria meningitidis serogroup B strain MC58.</title>
        <authorList>
            <person name="Tettelin H."/>
            <person name="Saunders N.J."/>
            <person name="Heidelberg J.F."/>
            <person name="Jeffries A.C."/>
            <person name="Nelson K.E."/>
            <person name="Eisen J.A."/>
            <person name="Ketchum K.A."/>
            <person name="Hood D.W."/>
            <person name="Peden J.F."/>
            <person name="Dodson R.J."/>
            <person name="Nelson W.C."/>
            <person name="Gwinn M.L."/>
            <person name="DeBoy R.T."/>
            <person name="Peterson J.D."/>
            <person name="Hickey E.K."/>
            <person name="Haft D.H."/>
            <person name="Salzberg S.L."/>
            <person name="White O."/>
            <person name="Fleischmann R.D."/>
            <person name="Dougherty B.A."/>
            <person name="Mason T.M."/>
            <person name="Ciecko A."/>
            <person name="Parksey D.S."/>
            <person name="Blair E."/>
            <person name="Cittone H."/>
            <person name="Clark E.B."/>
            <person name="Cotton M.D."/>
            <person name="Utterback T.R."/>
            <person name="Khouri H.M."/>
            <person name="Qin H."/>
            <person name="Vamathevan J.J."/>
            <person name="Gill J."/>
            <person name="Scarlato V."/>
            <person name="Masignani V."/>
            <person name="Pizza M."/>
            <person name="Grandi G."/>
            <person name="Sun L."/>
            <person name="Smith H.O."/>
            <person name="Fraser C.M."/>
            <person name="Moxon E.R."/>
            <person name="Rappuoli R."/>
            <person name="Venter J.C."/>
        </authorList>
    </citation>
    <scope>NUCLEOTIDE SEQUENCE [LARGE SCALE GENOMIC DNA]</scope>
    <source>
        <strain>ATCC BAA-335 / MC58</strain>
    </source>
</reference>
<protein>
    <recommendedName>
        <fullName evidence="1">Large ribosomal subunit protein bL31</fullName>
    </recommendedName>
    <alternativeName>
        <fullName evidence="2">50S ribosomal protein L31</fullName>
    </alternativeName>
</protein>
<proteinExistence type="inferred from homology"/>
<sequence>MKQGIHPNYHEVNVTCSCGNKFATKSAMEKENFNIEVCSLCHPFYTGTQKIVDTTGRVDKFNNKFGNLFKR</sequence>
<comment type="function">
    <text evidence="1">Binds the 23S rRNA.</text>
</comment>
<comment type="cofactor">
    <cofactor evidence="1">
        <name>Zn(2+)</name>
        <dbReference type="ChEBI" id="CHEBI:29105"/>
    </cofactor>
    <text evidence="1">Binds 1 zinc ion per subunit.</text>
</comment>
<comment type="subunit">
    <text evidence="1">Part of the 50S ribosomal subunit.</text>
</comment>
<comment type="similarity">
    <text evidence="1">Belongs to the bacterial ribosomal protein bL31 family. Type A subfamily.</text>
</comment>
<name>RL31_NEIMB</name>